<organism>
    <name type="scientific">Pasteurella multocida (strain Pm70)</name>
    <dbReference type="NCBI Taxonomy" id="272843"/>
    <lineage>
        <taxon>Bacteria</taxon>
        <taxon>Pseudomonadati</taxon>
        <taxon>Pseudomonadota</taxon>
        <taxon>Gammaproteobacteria</taxon>
        <taxon>Pasteurellales</taxon>
        <taxon>Pasteurellaceae</taxon>
        <taxon>Pasteurella</taxon>
    </lineage>
</organism>
<protein>
    <recommendedName>
        <fullName evidence="1">Adenylate kinase</fullName>
        <shortName evidence="1">AK</shortName>
        <ecNumber evidence="1">2.7.4.3</ecNumber>
    </recommendedName>
    <alternativeName>
        <fullName evidence="1">ATP-AMP transphosphorylase</fullName>
    </alternativeName>
    <alternativeName>
        <fullName evidence="1">ATP:AMP phosphotransferase</fullName>
    </alternativeName>
    <alternativeName>
        <fullName evidence="1">Adenylate monophosphate kinase</fullName>
    </alternativeName>
</protein>
<feature type="chain" id="PRO_0000158822" description="Adenylate kinase">
    <location>
        <begin position="1"/>
        <end position="214"/>
    </location>
</feature>
<feature type="region of interest" description="NMP" evidence="1">
    <location>
        <begin position="30"/>
        <end position="59"/>
    </location>
</feature>
<feature type="region of interest" description="LID" evidence="1">
    <location>
        <begin position="122"/>
        <end position="159"/>
    </location>
</feature>
<feature type="binding site" evidence="1">
    <location>
        <begin position="10"/>
        <end position="15"/>
    </location>
    <ligand>
        <name>ATP</name>
        <dbReference type="ChEBI" id="CHEBI:30616"/>
    </ligand>
</feature>
<feature type="binding site" evidence="1">
    <location>
        <position position="31"/>
    </location>
    <ligand>
        <name>AMP</name>
        <dbReference type="ChEBI" id="CHEBI:456215"/>
    </ligand>
</feature>
<feature type="binding site" evidence="1">
    <location>
        <position position="36"/>
    </location>
    <ligand>
        <name>AMP</name>
        <dbReference type="ChEBI" id="CHEBI:456215"/>
    </ligand>
</feature>
<feature type="binding site" evidence="1">
    <location>
        <begin position="57"/>
        <end position="59"/>
    </location>
    <ligand>
        <name>AMP</name>
        <dbReference type="ChEBI" id="CHEBI:456215"/>
    </ligand>
</feature>
<feature type="binding site" evidence="1">
    <location>
        <begin position="85"/>
        <end position="88"/>
    </location>
    <ligand>
        <name>AMP</name>
        <dbReference type="ChEBI" id="CHEBI:456215"/>
    </ligand>
</feature>
<feature type="binding site" evidence="1">
    <location>
        <position position="92"/>
    </location>
    <ligand>
        <name>AMP</name>
        <dbReference type="ChEBI" id="CHEBI:456215"/>
    </ligand>
</feature>
<feature type="binding site" evidence="1">
    <location>
        <position position="123"/>
    </location>
    <ligand>
        <name>ATP</name>
        <dbReference type="ChEBI" id="CHEBI:30616"/>
    </ligand>
</feature>
<feature type="binding site" evidence="1">
    <location>
        <begin position="132"/>
        <end position="133"/>
    </location>
    <ligand>
        <name>ATP</name>
        <dbReference type="ChEBI" id="CHEBI:30616"/>
    </ligand>
</feature>
<feature type="binding site" evidence="1">
    <location>
        <position position="156"/>
    </location>
    <ligand>
        <name>AMP</name>
        <dbReference type="ChEBI" id="CHEBI:456215"/>
    </ligand>
</feature>
<feature type="binding site" evidence="1">
    <location>
        <position position="167"/>
    </location>
    <ligand>
        <name>AMP</name>
        <dbReference type="ChEBI" id="CHEBI:456215"/>
    </ligand>
</feature>
<feature type="binding site" evidence="1">
    <location>
        <position position="200"/>
    </location>
    <ligand>
        <name>ATP</name>
        <dbReference type="ChEBI" id="CHEBI:30616"/>
    </ligand>
</feature>
<proteinExistence type="inferred from homology"/>
<comment type="function">
    <text evidence="1">Catalyzes the reversible transfer of the terminal phosphate group between ATP and AMP. Plays an important role in cellular energy homeostasis and in adenine nucleotide metabolism.</text>
</comment>
<comment type="catalytic activity">
    <reaction evidence="1">
        <text>AMP + ATP = 2 ADP</text>
        <dbReference type="Rhea" id="RHEA:12973"/>
        <dbReference type="ChEBI" id="CHEBI:30616"/>
        <dbReference type="ChEBI" id="CHEBI:456215"/>
        <dbReference type="ChEBI" id="CHEBI:456216"/>
        <dbReference type="EC" id="2.7.4.3"/>
    </reaction>
</comment>
<comment type="pathway">
    <text evidence="1">Purine metabolism; AMP biosynthesis via salvage pathway; AMP from ADP: step 1/1.</text>
</comment>
<comment type="subunit">
    <text evidence="1">Monomer.</text>
</comment>
<comment type="subcellular location">
    <subcellularLocation>
        <location evidence="1">Cytoplasm</location>
    </subcellularLocation>
</comment>
<comment type="domain">
    <text evidence="1">Consists of three domains, a large central CORE domain and two small peripheral domains, NMPbind and LID, which undergo movements during catalysis. The LID domain closes over the site of phosphoryl transfer upon ATP binding. Assembling and dissambling the active center during each catalytic cycle provides an effective means to prevent ATP hydrolysis.</text>
</comment>
<comment type="similarity">
    <text evidence="1">Belongs to the adenylate kinase family.</text>
</comment>
<sequence>MKIILLGAPGAGKGTQAQFIMNKFGIPQISTGDMLRGAIKAGTDLGKQAKTLMDAGQLVPDDLIISLVKERVAQADCAKGFLLDGFPRTIPQADALKTVGIQIDYVLEFDVPDEVIVERMSGRRVHQASGRTYHVVYNPPKVEGKDDVTGEDLIIRADDKPETVLDRLKVYHSTTKPLVDYYQAEAKAGNTKYFRLDGTKKVEEVSQELDTILA</sequence>
<dbReference type="EC" id="2.7.4.3" evidence="1"/>
<dbReference type="EMBL" id="AE004439">
    <property type="protein sequence ID" value="AAK02368.1"/>
    <property type="molecule type" value="Genomic_DNA"/>
</dbReference>
<dbReference type="RefSeq" id="WP_005721186.1">
    <property type="nucleotide sequence ID" value="NC_002663.1"/>
</dbReference>
<dbReference type="SMR" id="P57837"/>
<dbReference type="STRING" id="272843.PM0284"/>
<dbReference type="EnsemblBacteria" id="AAK02368">
    <property type="protein sequence ID" value="AAK02368"/>
    <property type="gene ID" value="PM0284"/>
</dbReference>
<dbReference type="KEGG" id="pmu:PM0284"/>
<dbReference type="PATRIC" id="fig|272843.6.peg.293"/>
<dbReference type="HOGENOM" id="CLU_032354_1_2_6"/>
<dbReference type="OrthoDB" id="9805030at2"/>
<dbReference type="UniPathway" id="UPA00588">
    <property type="reaction ID" value="UER00649"/>
</dbReference>
<dbReference type="Proteomes" id="UP000000809">
    <property type="component" value="Chromosome"/>
</dbReference>
<dbReference type="GO" id="GO:0005737">
    <property type="term" value="C:cytoplasm"/>
    <property type="evidence" value="ECO:0007669"/>
    <property type="project" value="UniProtKB-SubCell"/>
</dbReference>
<dbReference type="GO" id="GO:0004017">
    <property type="term" value="F:adenylate kinase activity"/>
    <property type="evidence" value="ECO:0007669"/>
    <property type="project" value="UniProtKB-UniRule"/>
</dbReference>
<dbReference type="GO" id="GO:0005524">
    <property type="term" value="F:ATP binding"/>
    <property type="evidence" value="ECO:0007669"/>
    <property type="project" value="UniProtKB-UniRule"/>
</dbReference>
<dbReference type="GO" id="GO:0044209">
    <property type="term" value="P:AMP salvage"/>
    <property type="evidence" value="ECO:0007669"/>
    <property type="project" value="UniProtKB-UniRule"/>
</dbReference>
<dbReference type="CDD" id="cd01428">
    <property type="entry name" value="ADK"/>
    <property type="match status" value="1"/>
</dbReference>
<dbReference type="FunFam" id="3.40.50.300:FF:000106">
    <property type="entry name" value="Adenylate kinase mitochondrial"/>
    <property type="match status" value="1"/>
</dbReference>
<dbReference type="Gene3D" id="3.40.50.300">
    <property type="entry name" value="P-loop containing nucleotide triphosphate hydrolases"/>
    <property type="match status" value="1"/>
</dbReference>
<dbReference type="HAMAP" id="MF_00235">
    <property type="entry name" value="Adenylate_kinase_Adk"/>
    <property type="match status" value="1"/>
</dbReference>
<dbReference type="InterPro" id="IPR006259">
    <property type="entry name" value="Adenyl_kin_sub"/>
</dbReference>
<dbReference type="InterPro" id="IPR000850">
    <property type="entry name" value="Adenylat/UMP-CMP_kin"/>
</dbReference>
<dbReference type="InterPro" id="IPR033690">
    <property type="entry name" value="Adenylat_kinase_CS"/>
</dbReference>
<dbReference type="InterPro" id="IPR007862">
    <property type="entry name" value="Adenylate_kinase_lid-dom"/>
</dbReference>
<dbReference type="InterPro" id="IPR027417">
    <property type="entry name" value="P-loop_NTPase"/>
</dbReference>
<dbReference type="NCBIfam" id="TIGR01351">
    <property type="entry name" value="adk"/>
    <property type="match status" value="1"/>
</dbReference>
<dbReference type="NCBIfam" id="NF001379">
    <property type="entry name" value="PRK00279.1-1"/>
    <property type="match status" value="1"/>
</dbReference>
<dbReference type="NCBIfam" id="NF001380">
    <property type="entry name" value="PRK00279.1-2"/>
    <property type="match status" value="1"/>
</dbReference>
<dbReference type="NCBIfam" id="NF001381">
    <property type="entry name" value="PRK00279.1-3"/>
    <property type="match status" value="1"/>
</dbReference>
<dbReference type="NCBIfam" id="NF011100">
    <property type="entry name" value="PRK14527.1"/>
    <property type="match status" value="1"/>
</dbReference>
<dbReference type="PANTHER" id="PTHR23359">
    <property type="entry name" value="NUCLEOTIDE KINASE"/>
    <property type="match status" value="1"/>
</dbReference>
<dbReference type="Pfam" id="PF00406">
    <property type="entry name" value="ADK"/>
    <property type="match status" value="1"/>
</dbReference>
<dbReference type="Pfam" id="PF05191">
    <property type="entry name" value="ADK_lid"/>
    <property type="match status" value="1"/>
</dbReference>
<dbReference type="PRINTS" id="PR00094">
    <property type="entry name" value="ADENYLTKNASE"/>
</dbReference>
<dbReference type="SUPFAM" id="SSF52540">
    <property type="entry name" value="P-loop containing nucleoside triphosphate hydrolases"/>
    <property type="match status" value="1"/>
</dbReference>
<dbReference type="PROSITE" id="PS00113">
    <property type="entry name" value="ADENYLATE_KINASE"/>
    <property type="match status" value="1"/>
</dbReference>
<reference key="1">
    <citation type="journal article" date="2001" name="Proc. Natl. Acad. Sci. U.S.A.">
        <title>Complete genomic sequence of Pasteurella multocida Pm70.</title>
        <authorList>
            <person name="May B.J."/>
            <person name="Zhang Q."/>
            <person name="Li L.L."/>
            <person name="Paustian M.L."/>
            <person name="Whittam T.S."/>
            <person name="Kapur V."/>
        </authorList>
    </citation>
    <scope>NUCLEOTIDE SEQUENCE [LARGE SCALE GENOMIC DNA]</scope>
    <source>
        <strain>Pm70</strain>
    </source>
</reference>
<accession>P57837</accession>
<gene>
    <name evidence="1" type="primary">adk</name>
    <name type="ordered locus">PM0284</name>
</gene>
<keyword id="KW-0067">ATP-binding</keyword>
<keyword id="KW-0963">Cytoplasm</keyword>
<keyword id="KW-0418">Kinase</keyword>
<keyword id="KW-0545">Nucleotide biosynthesis</keyword>
<keyword id="KW-0547">Nucleotide-binding</keyword>
<keyword id="KW-1185">Reference proteome</keyword>
<keyword id="KW-0808">Transferase</keyword>
<name>KAD_PASMU</name>
<evidence type="ECO:0000255" key="1">
    <source>
        <dbReference type="HAMAP-Rule" id="MF_00235"/>
    </source>
</evidence>